<reference key="1">
    <citation type="journal article" date="2002" name="Nature">
        <title>The genome sequence of Schizosaccharomyces pombe.</title>
        <authorList>
            <person name="Wood V."/>
            <person name="Gwilliam R."/>
            <person name="Rajandream M.A."/>
            <person name="Lyne M.H."/>
            <person name="Lyne R."/>
            <person name="Stewart A."/>
            <person name="Sgouros J.G."/>
            <person name="Peat N."/>
            <person name="Hayles J."/>
            <person name="Baker S.G."/>
            <person name="Basham D."/>
            <person name="Bowman S."/>
            <person name="Brooks K."/>
            <person name="Brown D."/>
            <person name="Brown S."/>
            <person name="Chillingworth T."/>
            <person name="Churcher C.M."/>
            <person name="Collins M."/>
            <person name="Connor R."/>
            <person name="Cronin A."/>
            <person name="Davis P."/>
            <person name="Feltwell T."/>
            <person name="Fraser A."/>
            <person name="Gentles S."/>
            <person name="Goble A."/>
            <person name="Hamlin N."/>
            <person name="Harris D.E."/>
            <person name="Hidalgo J."/>
            <person name="Hodgson G."/>
            <person name="Holroyd S."/>
            <person name="Hornsby T."/>
            <person name="Howarth S."/>
            <person name="Huckle E.J."/>
            <person name="Hunt S."/>
            <person name="Jagels K."/>
            <person name="James K.D."/>
            <person name="Jones L."/>
            <person name="Jones M."/>
            <person name="Leather S."/>
            <person name="McDonald S."/>
            <person name="McLean J."/>
            <person name="Mooney P."/>
            <person name="Moule S."/>
            <person name="Mungall K.L."/>
            <person name="Murphy L.D."/>
            <person name="Niblett D."/>
            <person name="Odell C."/>
            <person name="Oliver K."/>
            <person name="O'Neil S."/>
            <person name="Pearson D."/>
            <person name="Quail M.A."/>
            <person name="Rabbinowitsch E."/>
            <person name="Rutherford K.M."/>
            <person name="Rutter S."/>
            <person name="Saunders D."/>
            <person name="Seeger K."/>
            <person name="Sharp S."/>
            <person name="Skelton J."/>
            <person name="Simmonds M.N."/>
            <person name="Squares R."/>
            <person name="Squares S."/>
            <person name="Stevens K."/>
            <person name="Taylor K."/>
            <person name="Taylor R.G."/>
            <person name="Tivey A."/>
            <person name="Walsh S.V."/>
            <person name="Warren T."/>
            <person name="Whitehead S."/>
            <person name="Woodward J.R."/>
            <person name="Volckaert G."/>
            <person name="Aert R."/>
            <person name="Robben J."/>
            <person name="Grymonprez B."/>
            <person name="Weltjens I."/>
            <person name="Vanstreels E."/>
            <person name="Rieger M."/>
            <person name="Schaefer M."/>
            <person name="Mueller-Auer S."/>
            <person name="Gabel C."/>
            <person name="Fuchs M."/>
            <person name="Duesterhoeft A."/>
            <person name="Fritzc C."/>
            <person name="Holzer E."/>
            <person name="Moestl D."/>
            <person name="Hilbert H."/>
            <person name="Borzym K."/>
            <person name="Langer I."/>
            <person name="Beck A."/>
            <person name="Lehrach H."/>
            <person name="Reinhardt R."/>
            <person name="Pohl T.M."/>
            <person name="Eger P."/>
            <person name="Zimmermann W."/>
            <person name="Wedler H."/>
            <person name="Wambutt R."/>
            <person name="Purnelle B."/>
            <person name="Goffeau A."/>
            <person name="Cadieu E."/>
            <person name="Dreano S."/>
            <person name="Gloux S."/>
            <person name="Lelaure V."/>
            <person name="Mottier S."/>
            <person name="Galibert F."/>
            <person name="Aves S.J."/>
            <person name="Xiang Z."/>
            <person name="Hunt C."/>
            <person name="Moore K."/>
            <person name="Hurst S.M."/>
            <person name="Lucas M."/>
            <person name="Rochet M."/>
            <person name="Gaillardin C."/>
            <person name="Tallada V.A."/>
            <person name="Garzon A."/>
            <person name="Thode G."/>
            <person name="Daga R.R."/>
            <person name="Cruzado L."/>
            <person name="Jimenez J."/>
            <person name="Sanchez M."/>
            <person name="del Rey F."/>
            <person name="Benito J."/>
            <person name="Dominguez A."/>
            <person name="Revuelta J.L."/>
            <person name="Moreno S."/>
            <person name="Armstrong J."/>
            <person name="Forsburg S.L."/>
            <person name="Cerutti L."/>
            <person name="Lowe T."/>
            <person name="McCombie W.R."/>
            <person name="Paulsen I."/>
            <person name="Potashkin J."/>
            <person name="Shpakovski G.V."/>
            <person name="Ussery D."/>
            <person name="Barrell B.G."/>
            <person name="Nurse P."/>
        </authorList>
    </citation>
    <scope>NUCLEOTIDE SEQUENCE [LARGE SCALE GENOMIC DNA]</scope>
    <source>
        <strain>972 / ATCC 24843</strain>
    </source>
</reference>
<reference key="2">
    <citation type="journal article" date="2003" name="Genome Res.">
        <title>Retrotransposons and their recognition of pol II promoters: a comprehensive survey of the transposable elements from the complete genome sequence of Schizosaccharomyces pombe.</title>
        <authorList>
            <person name="Bowen N.J."/>
            <person name="Jordan I.K."/>
            <person name="Epstein J.A."/>
            <person name="Wood V."/>
            <person name="Levin H.L."/>
        </authorList>
    </citation>
    <scope>NOMENCLATURE</scope>
</reference>
<feature type="chain" id="PRO_0000424428" description="Transposon Tf2-6 polyprotein">
    <location>
        <begin position="1"/>
        <end position="1333"/>
    </location>
</feature>
<feature type="domain" description="Peptidase A2">
    <location>
        <begin position="266"/>
        <end position="342"/>
    </location>
</feature>
<feature type="domain" description="Reverse transcriptase" evidence="2">
    <location>
        <begin position="436"/>
        <end position="615"/>
    </location>
</feature>
<feature type="domain" description="Integrase catalytic" evidence="3">
    <location>
        <begin position="979"/>
        <end position="1138"/>
    </location>
</feature>
<feature type="region of interest" description="Disordered" evidence="5">
    <location>
        <begin position="199"/>
        <end position="231"/>
    </location>
</feature>
<feature type="compositionally biased region" description="Polar residues" evidence="5">
    <location>
        <begin position="218"/>
        <end position="231"/>
    </location>
</feature>
<feature type="active site" description="For protease activity" evidence="4">
    <location>
        <position position="271"/>
    </location>
</feature>
<feature type="binding site" evidence="1">
    <location>
        <position position="502"/>
    </location>
    <ligand>
        <name>Mg(2+)</name>
        <dbReference type="ChEBI" id="CHEBI:18420"/>
        <label>1</label>
        <note>catalytic; for reverse transcriptase activity</note>
    </ligand>
</feature>
<feature type="binding site" evidence="1">
    <location>
        <position position="566"/>
    </location>
    <ligand>
        <name>Mg(2+)</name>
        <dbReference type="ChEBI" id="CHEBI:18420"/>
        <label>1</label>
        <note>catalytic; for reverse transcriptase activity</note>
    </ligand>
</feature>
<feature type="binding site" evidence="1">
    <location>
        <position position="567"/>
    </location>
    <ligand>
        <name>Mg(2+)</name>
        <dbReference type="ChEBI" id="CHEBI:18420"/>
        <label>1</label>
        <note>catalytic; for reverse transcriptase activity</note>
    </ligand>
</feature>
<feature type="binding site" evidence="1">
    <location>
        <position position="990"/>
    </location>
    <ligand>
        <name>Mg(2+)</name>
        <dbReference type="ChEBI" id="CHEBI:18420"/>
        <label>2</label>
        <note>catalytic; for integrase activity</note>
    </ligand>
</feature>
<feature type="binding site" evidence="1">
    <location>
        <position position="1050"/>
    </location>
    <ligand>
        <name>Mg(2+)</name>
        <dbReference type="ChEBI" id="CHEBI:18420"/>
        <label>2</label>
        <note>catalytic; for integrase activity</note>
    </ligand>
</feature>
<protein>
    <recommendedName>
        <fullName>Transposon Tf2-6 polyprotein</fullName>
    </recommendedName>
    <alternativeName>
        <fullName>Retrotransposable element Tf2 155 kDa protein</fullName>
    </alternativeName>
</protein>
<comment type="PTM">
    <text evidence="1">Processing of the polyproteins proceeds by an ordered pathway, called maturation. It involves the initial cleavage of a 27 kDa capsid protein (CA) from the N-terminus of the polyprotein, followed by the cleavage of a 56 kDa integrase (IN) from the C-terminus. This leaves a 72 kDa protease-reverse transcriptase fusion protein (PR-RT), which does not seem to be processed further (By similarity).</text>
</comment>
<comment type="miscellaneous">
    <text>Retrotransposons are mobile genetic entities that are able to replicate via an RNA intermediate and a reverse transcription step. In contrast to retroviruses, retrotransposons are non-infectious, lack an envelope and remain intracellular. Tf2 retrotransposons belong to the gypsy-like elements (metaviridae).</text>
</comment>
<dbReference type="EMBL" id="CU329670">
    <property type="protein sequence ID" value="CAB11682.1"/>
    <property type="molecule type" value="Genomic_DNA"/>
</dbReference>
<dbReference type="PIR" id="T38401">
    <property type="entry name" value="T38401"/>
</dbReference>
<dbReference type="RefSeq" id="NP_594409.1">
    <property type="nucleotide sequence ID" value="NM_001019840.1"/>
</dbReference>
<dbReference type="SMR" id="P0CT39"/>
<dbReference type="FunCoup" id="P0CT39">
    <property type="interactions" value="2"/>
</dbReference>
<dbReference type="STRING" id="284812.P0CT39"/>
<dbReference type="MEROPS" id="A02.051"/>
<dbReference type="EnsemblFungi" id="SPAC27E2.08.1">
    <property type="protein sequence ID" value="SPAC27E2.08.1:pep"/>
    <property type="gene ID" value="SPAC27E2.08"/>
</dbReference>
<dbReference type="EnsemblFungi" id="SPAC2E1P3.03c.1">
    <property type="protein sequence ID" value="SPAC2E1P3.03c.1:pep"/>
    <property type="gene ID" value="SPAC2E1P3.03c"/>
</dbReference>
<dbReference type="EnsemblFungi" id="SPAPB15E9.03c.1">
    <property type="protein sequence ID" value="SPAPB15E9.03c.1:pep"/>
    <property type="gene ID" value="SPAPB15E9.03c"/>
</dbReference>
<dbReference type="EnsemblFungi" id="SPCC1020.14.1">
    <property type="protein sequence ID" value="SPCC1020.14.1:pep"/>
    <property type="gene ID" value="SPCC1020.14"/>
</dbReference>
<dbReference type="GeneID" id="2541991"/>
<dbReference type="KEGG" id="spo:2538755"/>
<dbReference type="KEGG" id="spo:2541833"/>
<dbReference type="KEGG" id="spo:2541991"/>
<dbReference type="KEGG" id="spo:3361422"/>
<dbReference type="PomBase" id="SPAC27E2.08">
    <property type="gene designation" value="Tf2-6"/>
</dbReference>
<dbReference type="VEuPathDB" id="FungiDB:SPAC27E2.08"/>
<dbReference type="VEuPathDB" id="FungiDB:SPAC2E1P3.03c"/>
<dbReference type="VEuPathDB" id="FungiDB:SPAPB15E9.03c"/>
<dbReference type="VEuPathDB" id="FungiDB:SPCC1020.14"/>
<dbReference type="HOGENOM" id="CLU_000384_4_0_1"/>
<dbReference type="InParanoid" id="P0CT39"/>
<dbReference type="PRO" id="PR:P0CT39"/>
<dbReference type="Proteomes" id="UP000002485">
    <property type="component" value="Chromosome I"/>
</dbReference>
<dbReference type="GO" id="GO:0005634">
    <property type="term" value="C:nucleus"/>
    <property type="evidence" value="ECO:0007669"/>
    <property type="project" value="UniProtKB-ARBA"/>
</dbReference>
<dbReference type="GO" id="GO:0004190">
    <property type="term" value="F:aspartic-type endopeptidase activity"/>
    <property type="evidence" value="ECO:0007669"/>
    <property type="project" value="UniProtKB-KW"/>
</dbReference>
<dbReference type="GO" id="GO:0003677">
    <property type="term" value="F:DNA binding"/>
    <property type="evidence" value="ECO:0007669"/>
    <property type="project" value="UniProtKB-KW"/>
</dbReference>
<dbReference type="GO" id="GO:0003887">
    <property type="term" value="F:DNA-directed DNA polymerase activity"/>
    <property type="evidence" value="ECO:0007669"/>
    <property type="project" value="UniProtKB-KW"/>
</dbReference>
<dbReference type="GO" id="GO:0004519">
    <property type="term" value="F:endonuclease activity"/>
    <property type="evidence" value="ECO:0007669"/>
    <property type="project" value="UniProtKB-KW"/>
</dbReference>
<dbReference type="GO" id="GO:0046872">
    <property type="term" value="F:metal ion binding"/>
    <property type="evidence" value="ECO:0007669"/>
    <property type="project" value="UniProtKB-KW"/>
</dbReference>
<dbReference type="GO" id="GO:0003723">
    <property type="term" value="F:RNA binding"/>
    <property type="evidence" value="ECO:0007669"/>
    <property type="project" value="UniProtKB-KW"/>
</dbReference>
<dbReference type="GO" id="GO:0003964">
    <property type="term" value="F:RNA-directed DNA polymerase activity"/>
    <property type="evidence" value="ECO:0007669"/>
    <property type="project" value="UniProtKB-KW"/>
</dbReference>
<dbReference type="GO" id="GO:0015074">
    <property type="term" value="P:DNA integration"/>
    <property type="evidence" value="ECO:0007669"/>
    <property type="project" value="UniProtKB-KW"/>
</dbReference>
<dbReference type="GO" id="GO:0006310">
    <property type="term" value="P:DNA recombination"/>
    <property type="evidence" value="ECO:0007669"/>
    <property type="project" value="UniProtKB-KW"/>
</dbReference>
<dbReference type="GO" id="GO:0006508">
    <property type="term" value="P:proteolysis"/>
    <property type="evidence" value="ECO:0007669"/>
    <property type="project" value="UniProtKB-KW"/>
</dbReference>
<dbReference type="CDD" id="cd00303">
    <property type="entry name" value="retropepsin_like"/>
    <property type="match status" value="1"/>
</dbReference>
<dbReference type="CDD" id="cd09274">
    <property type="entry name" value="RNase_HI_RT_Ty3"/>
    <property type="match status" value="1"/>
</dbReference>
<dbReference type="CDD" id="cd01647">
    <property type="entry name" value="RT_LTR"/>
    <property type="match status" value="1"/>
</dbReference>
<dbReference type="FunFam" id="3.10.20.370:FF:000003">
    <property type="entry name" value="Transposon Tf2-6 polyprotein"/>
    <property type="match status" value="1"/>
</dbReference>
<dbReference type="FunFam" id="3.30.70.270:FF:000045">
    <property type="entry name" value="Transposon Tf2-7 polyprotein"/>
    <property type="match status" value="1"/>
</dbReference>
<dbReference type="Gene3D" id="1.10.340.70">
    <property type="match status" value="1"/>
</dbReference>
<dbReference type="Gene3D" id="3.10.20.370">
    <property type="match status" value="1"/>
</dbReference>
<dbReference type="Gene3D" id="3.30.70.270">
    <property type="match status" value="2"/>
</dbReference>
<dbReference type="Gene3D" id="2.40.70.10">
    <property type="entry name" value="Acid Proteases"/>
    <property type="match status" value="1"/>
</dbReference>
<dbReference type="Gene3D" id="3.10.10.10">
    <property type="entry name" value="HIV Type 1 Reverse Transcriptase, subunit A, domain 1"/>
    <property type="match status" value="1"/>
</dbReference>
<dbReference type="Gene3D" id="3.30.420.10">
    <property type="entry name" value="Ribonuclease H-like superfamily/Ribonuclease H"/>
    <property type="match status" value="1"/>
</dbReference>
<dbReference type="InterPro" id="IPR001969">
    <property type="entry name" value="Aspartic_peptidase_AS"/>
</dbReference>
<dbReference type="InterPro" id="IPR043502">
    <property type="entry name" value="DNA/RNA_pol_sf"/>
</dbReference>
<dbReference type="InterPro" id="IPR001584">
    <property type="entry name" value="Integrase_cat-core"/>
</dbReference>
<dbReference type="InterPro" id="IPR041588">
    <property type="entry name" value="Integrase_H2C2"/>
</dbReference>
<dbReference type="InterPro" id="IPR021109">
    <property type="entry name" value="Peptidase_aspartic_dom_sf"/>
</dbReference>
<dbReference type="InterPro" id="IPR050951">
    <property type="entry name" value="Retrovirus_Pol_polyprotein"/>
</dbReference>
<dbReference type="InterPro" id="IPR043128">
    <property type="entry name" value="Rev_trsase/Diguanyl_cyclase"/>
</dbReference>
<dbReference type="InterPro" id="IPR012337">
    <property type="entry name" value="RNaseH-like_sf"/>
</dbReference>
<dbReference type="InterPro" id="IPR036397">
    <property type="entry name" value="RNaseH_sf"/>
</dbReference>
<dbReference type="InterPro" id="IPR000477">
    <property type="entry name" value="RT_dom"/>
</dbReference>
<dbReference type="InterPro" id="IPR041577">
    <property type="entry name" value="RT_RNaseH_2"/>
</dbReference>
<dbReference type="InterPro" id="IPR056924">
    <property type="entry name" value="SH3_Tf2-1"/>
</dbReference>
<dbReference type="InterPro" id="IPR056930">
    <property type="entry name" value="Tf2-1-like_C"/>
</dbReference>
<dbReference type="InterPro" id="IPR024648">
    <property type="entry name" value="Tf2-1-like_dom"/>
</dbReference>
<dbReference type="PANTHER" id="PTHR37984">
    <property type="entry name" value="PROTEIN CBG26694"/>
    <property type="match status" value="1"/>
</dbReference>
<dbReference type="PANTHER" id="PTHR37984:SF5">
    <property type="entry name" value="PROTEIN NYNRIN-LIKE"/>
    <property type="match status" value="1"/>
</dbReference>
<dbReference type="Pfam" id="PF17921">
    <property type="entry name" value="Integrase_H2C2"/>
    <property type="match status" value="1"/>
</dbReference>
<dbReference type="Pfam" id="PF12382">
    <property type="entry name" value="Peptidase_A2_2"/>
    <property type="match status" value="1"/>
</dbReference>
<dbReference type="Pfam" id="PF17919">
    <property type="entry name" value="RT_RNaseH_2"/>
    <property type="match status" value="1"/>
</dbReference>
<dbReference type="Pfam" id="PF00665">
    <property type="entry name" value="rve"/>
    <property type="match status" value="1"/>
</dbReference>
<dbReference type="Pfam" id="PF00078">
    <property type="entry name" value="RVT_1"/>
    <property type="match status" value="1"/>
</dbReference>
<dbReference type="Pfam" id="PF24626">
    <property type="entry name" value="SH3_Tf2-1"/>
    <property type="match status" value="1"/>
</dbReference>
<dbReference type="Pfam" id="PF24614">
    <property type="entry name" value="Tf2-1_C"/>
    <property type="match status" value="1"/>
</dbReference>
<dbReference type="SUPFAM" id="SSF50630">
    <property type="entry name" value="Acid proteases"/>
    <property type="match status" value="1"/>
</dbReference>
<dbReference type="SUPFAM" id="SSF56672">
    <property type="entry name" value="DNA/RNA polymerases"/>
    <property type="match status" value="1"/>
</dbReference>
<dbReference type="SUPFAM" id="SSF53098">
    <property type="entry name" value="Ribonuclease H-like"/>
    <property type="match status" value="1"/>
</dbReference>
<dbReference type="PROSITE" id="PS00141">
    <property type="entry name" value="ASP_PROTEASE"/>
    <property type="match status" value="1"/>
</dbReference>
<dbReference type="PROSITE" id="PS50994">
    <property type="entry name" value="INTEGRASE"/>
    <property type="match status" value="1"/>
</dbReference>
<dbReference type="PROSITE" id="PS50878">
    <property type="entry name" value="RT_POL"/>
    <property type="match status" value="1"/>
</dbReference>
<name>TF26_SCHPO</name>
<evidence type="ECO:0000250" key="1"/>
<evidence type="ECO:0000255" key="2">
    <source>
        <dbReference type="PROSITE-ProRule" id="PRU00405"/>
    </source>
</evidence>
<evidence type="ECO:0000255" key="3">
    <source>
        <dbReference type="PROSITE-ProRule" id="PRU00457"/>
    </source>
</evidence>
<evidence type="ECO:0000255" key="4">
    <source>
        <dbReference type="PROSITE-ProRule" id="PRU10094"/>
    </source>
</evidence>
<evidence type="ECO:0000256" key="5">
    <source>
        <dbReference type="SAM" id="MobiDB-lite"/>
    </source>
</evidence>
<sequence length="1333" mass="154916">MSYANYRYMKARAKRWRPENLDGIQTSDEHLINLFAKILSKHVPEIGKFDPNKDVESYISKLDQHFTEYPSLFPNEHTKRQYTLNHLEELEQQFAERMFSENGSLTWQELLRQTGKVQGSNKGDRLTKTFEGFRNQLDKVQFIRKLMSKANVDDFHTRLFILWMLPYSLRKLKERNYWKSEISEIYDFLEDKRTASYGKTHKRFQPQNKNLGKESLSKKNNTTNSRNLRKTNVSRIEYSSNKFLNHTRKRYEMVLQAELPDFKCSIPCLIDTGAQANIITEETVRAHKLPTRPWSKSVIYGGVYPNKINRKTIKLNISLNGISIKTEFLVVKKFSHPAAISFTTLYDNNIEISSSKHTLSQMNKVSNIVKEPELPDIYKEFKDITAETNTEKLPKPIKGLEFEVELTQENYRLPIRNYPLPPGKMQAMNDEINQGLKSGIIRESKAINACPVMFVPKKEGTLRMVVDYKPLNKYVKPNIYPLPLIEQLLAKIQGSTIFTKLDLKSAYHLIRVRKGDEHKLAFRCPRGVFEYLVMPYGISTAPAHFQYFINTILGEAKESHVVCYMDDILIHSKSESEHVKHVKDVLQKLKNANLIINQAKCEFHQSQVKFIGYHISEKGFTPCQENIDKVLQWKQPKNRKELRQFLGSVNYLRKFIPKTSQLTHPLNNLLKKDVRWKWTPTQTQAIENIKQCLVSPPVLRHFDFSKKILLETDASDVAVGAVLSQKHDDDKYYPVGYYSAKMSKAQLNYSVSDKEMLAIIKSLKHWRHYLESTIEPFKILTDHRNLIGRITNESEPENKRLARWQLFLQDFNFEINYRPGSANHIADALSRIVDETEPIPKDSEDNSINFVNQISITDDFKNQVVTEYTNDTKLLNLLNNEDKRVEENIQLKDGLLINSKDQILLPNDTQLTRTIIKKYHEEGKLIHPGIELLTNIILRRFTWKGIRKQIQEYVQNCHTCQINKSRNHKPYGPLQPIPPSERPWESLSMDFITALPESSGYNALFVVVDRFSKMAILVPCTKSITAEQTARMFDQRVIAYFGNPKEIIADNDHIFTSQTWKDFAHKYNFVMKFSLPYRPQTDGQTERTNQTVEKLLRCVCSTHPNTWVDHISLVQQSYNNAIHSATQMTPFEIVHRYSPALSPLELPSFSDKTDENSQETIQVFQTVKEHLNTNNIKMKKYFDMKIQEIEEFQPGDLVMVKRTKTGFLHKSNKLAPSFAGPFYVLQKSGPNNYELDLPDSIKHMFSSTFHVSHLEKYRHNSELNYATIDESDIGTILHILEHKNREQVLYLNVKYISNLNPSTIMSGWTTLATALQADKAIVNDYIKNNNLNI</sequence>
<organism>
    <name type="scientific">Schizosaccharomyces pombe (strain 972 / ATCC 24843)</name>
    <name type="common">Fission yeast</name>
    <dbReference type="NCBI Taxonomy" id="284812"/>
    <lineage>
        <taxon>Eukaryota</taxon>
        <taxon>Fungi</taxon>
        <taxon>Dikarya</taxon>
        <taxon>Ascomycota</taxon>
        <taxon>Taphrinomycotina</taxon>
        <taxon>Schizosaccharomycetes</taxon>
        <taxon>Schizosaccharomycetales</taxon>
        <taxon>Schizosaccharomycetaceae</taxon>
        <taxon>Schizosaccharomyces</taxon>
    </lineage>
</organism>
<keyword id="KW-0064">Aspartyl protease</keyword>
<keyword id="KW-0229">DNA integration</keyword>
<keyword id="KW-0233">DNA recombination</keyword>
<keyword id="KW-0238">DNA-binding</keyword>
<keyword id="KW-0239">DNA-directed DNA polymerase</keyword>
<keyword id="KW-0255">Endonuclease</keyword>
<keyword id="KW-0378">Hydrolase</keyword>
<keyword id="KW-0460">Magnesium</keyword>
<keyword id="KW-0479">Metal-binding</keyword>
<keyword id="KW-0511">Multifunctional enzyme</keyword>
<keyword id="KW-0540">Nuclease</keyword>
<keyword id="KW-0548">Nucleotidyltransferase</keyword>
<keyword id="KW-0645">Protease</keyword>
<keyword id="KW-1185">Reference proteome</keyword>
<keyword id="KW-0694">RNA-binding</keyword>
<keyword id="KW-0695">RNA-directed DNA polymerase</keyword>
<keyword id="KW-0808">Transferase</keyword>
<keyword id="KW-0814">Transposable element</keyword>
<accession>P0CT39</accession>
<accession>Q05654</accession>
<accession>Q96TJ6</accession>
<gene>
    <name type="primary">Tf2-6</name>
    <name type="ORF">SPAC27E2.08</name>
</gene>
<proteinExistence type="inferred from homology"/>